<evidence type="ECO:0000250" key="1"/>
<evidence type="ECO:0000255" key="2"/>
<evidence type="ECO:0000269" key="3">
    <source>
    </source>
</evidence>
<evidence type="ECO:0000305" key="4"/>
<evidence type="ECO:0000305" key="5">
    <source>
    </source>
</evidence>
<accession>P33342</accession>
<accession>Q2MAW8</accession>
<comment type="function">
    <text evidence="3">Part of the yehABCD fimbrial operon. Could contribute to adhesion to various surfaces in specific environmental niches.</text>
</comment>
<comment type="subcellular location">
    <subcellularLocation>
        <location evidence="1">Periplasm</location>
    </subcellularLocation>
</comment>
<comment type="induction">
    <text evidence="3">Expression is negatively regulated by H-NS and subjected to cAMP receptor protein (CRP)-mediated catabolite repression.</text>
</comment>
<comment type="disruption phenotype">
    <text evidence="3">Deletion of the operon under classical laboratory conditions does not result in any major effect on E.coli capacity to form biofilms compared with the wild-type strain.</text>
</comment>
<comment type="miscellaneous">
    <text evidence="5">The operon is cryptic under classical laboratory conditions, but is functional when constitutively expressed.</text>
</comment>
<comment type="similarity">
    <text evidence="4">Belongs to the periplasmic pilus chaperone family.</text>
</comment>
<dbReference type="EMBL" id="U00007">
    <property type="protein sequence ID" value="AAA60474.1"/>
    <property type="molecule type" value="Genomic_DNA"/>
</dbReference>
<dbReference type="EMBL" id="U00096">
    <property type="protein sequence ID" value="AAC75171.1"/>
    <property type="molecule type" value="Genomic_DNA"/>
</dbReference>
<dbReference type="EMBL" id="AP009048">
    <property type="protein sequence ID" value="BAE76588.1"/>
    <property type="molecule type" value="Genomic_DNA"/>
</dbReference>
<dbReference type="PIR" id="E64978">
    <property type="entry name" value="E64978"/>
</dbReference>
<dbReference type="RefSeq" id="NP_416613.1">
    <property type="nucleotide sequence ID" value="NC_000913.3"/>
</dbReference>
<dbReference type="SMR" id="P33342"/>
<dbReference type="BioGRID" id="4260436">
    <property type="interactions" value="30"/>
</dbReference>
<dbReference type="FunCoup" id="P33342">
    <property type="interactions" value="79"/>
</dbReference>
<dbReference type="IntAct" id="P33342">
    <property type="interactions" value="4"/>
</dbReference>
<dbReference type="STRING" id="511145.b2110"/>
<dbReference type="PaxDb" id="511145-b2110"/>
<dbReference type="EnsemblBacteria" id="AAC75171">
    <property type="protein sequence ID" value="AAC75171"/>
    <property type="gene ID" value="b2110"/>
</dbReference>
<dbReference type="GeneID" id="946621"/>
<dbReference type="KEGG" id="ecj:JW2097"/>
<dbReference type="KEGG" id="eco:b2110"/>
<dbReference type="PATRIC" id="fig|511145.12.peg.2187"/>
<dbReference type="EchoBASE" id="EB1932"/>
<dbReference type="eggNOG" id="COG3121">
    <property type="taxonomic scope" value="Bacteria"/>
</dbReference>
<dbReference type="HOGENOM" id="CLU_070768_0_1_6"/>
<dbReference type="InParanoid" id="P33342"/>
<dbReference type="OMA" id="TIMIAPQ"/>
<dbReference type="PhylomeDB" id="P33342"/>
<dbReference type="BioCyc" id="EcoCyc:EG11989-MONOMER"/>
<dbReference type="PRO" id="PR:P33342"/>
<dbReference type="Proteomes" id="UP000000625">
    <property type="component" value="Chromosome"/>
</dbReference>
<dbReference type="GO" id="GO:0030288">
    <property type="term" value="C:outer membrane-bounded periplasmic space"/>
    <property type="evidence" value="ECO:0000318"/>
    <property type="project" value="GO_Central"/>
</dbReference>
<dbReference type="GO" id="GO:0044183">
    <property type="term" value="F:protein folding chaperone"/>
    <property type="evidence" value="ECO:0000318"/>
    <property type="project" value="GO_Central"/>
</dbReference>
<dbReference type="GO" id="GO:0071555">
    <property type="term" value="P:cell wall organization"/>
    <property type="evidence" value="ECO:0007669"/>
    <property type="project" value="InterPro"/>
</dbReference>
<dbReference type="GO" id="GO:0061077">
    <property type="term" value="P:chaperone-mediated protein folding"/>
    <property type="evidence" value="ECO:0000318"/>
    <property type="project" value="GO_Central"/>
</dbReference>
<dbReference type="Gene3D" id="2.60.40.10">
    <property type="entry name" value="Immunoglobulins"/>
    <property type="match status" value="2"/>
</dbReference>
<dbReference type="InterPro" id="IPR013783">
    <property type="entry name" value="Ig-like_fold"/>
</dbReference>
<dbReference type="InterPro" id="IPR008962">
    <property type="entry name" value="PapD-like_sf"/>
</dbReference>
<dbReference type="InterPro" id="IPR050643">
    <property type="entry name" value="Periplasmic_pilus_chap"/>
</dbReference>
<dbReference type="InterPro" id="IPR036316">
    <property type="entry name" value="Pili_assmbl_chap_C_dom_sf"/>
</dbReference>
<dbReference type="InterPro" id="IPR001829">
    <property type="entry name" value="Pili_assmbl_chaperone_bac"/>
</dbReference>
<dbReference type="InterPro" id="IPR016148">
    <property type="entry name" value="Pili_assmbl_chaperone_C"/>
</dbReference>
<dbReference type="InterPro" id="IPR018046">
    <property type="entry name" value="Pili_assmbl_chaperone_CS"/>
</dbReference>
<dbReference type="InterPro" id="IPR016147">
    <property type="entry name" value="Pili_assmbl_chaperone_N"/>
</dbReference>
<dbReference type="PANTHER" id="PTHR30251:SF10">
    <property type="entry name" value="FIMBRIAL CHAPERONE YEHC-RELATED"/>
    <property type="match status" value="1"/>
</dbReference>
<dbReference type="PANTHER" id="PTHR30251">
    <property type="entry name" value="PILUS ASSEMBLY CHAPERONE"/>
    <property type="match status" value="1"/>
</dbReference>
<dbReference type="Pfam" id="PF02753">
    <property type="entry name" value="PapD_C"/>
    <property type="match status" value="1"/>
</dbReference>
<dbReference type="Pfam" id="PF00345">
    <property type="entry name" value="PapD_N"/>
    <property type="match status" value="1"/>
</dbReference>
<dbReference type="PRINTS" id="PR00969">
    <property type="entry name" value="CHAPERONPILI"/>
</dbReference>
<dbReference type="SUPFAM" id="SSF49354">
    <property type="entry name" value="PapD-like"/>
    <property type="match status" value="1"/>
</dbReference>
<dbReference type="SUPFAM" id="SSF49584">
    <property type="entry name" value="Periplasmic chaperone C-domain"/>
    <property type="match status" value="1"/>
</dbReference>
<dbReference type="PROSITE" id="PS00635">
    <property type="entry name" value="PILI_CHAPERONE"/>
    <property type="match status" value="1"/>
</dbReference>
<proteinExistence type="evidence at transcript level"/>
<reference key="1">
    <citation type="submission" date="1993-10" db="EMBL/GenBank/DDBJ databases">
        <title>Automated multiplex sequencing of the E.coli genome.</title>
        <authorList>
            <person name="Richterich P."/>
            <person name="Lakey N."/>
            <person name="Gryan G."/>
            <person name="Jaehn L."/>
            <person name="Mintz L."/>
            <person name="Robison K."/>
            <person name="Church G.M."/>
        </authorList>
    </citation>
    <scope>NUCLEOTIDE SEQUENCE [LARGE SCALE GENOMIC DNA]</scope>
    <source>
        <strain>K12 / BHB2600</strain>
    </source>
</reference>
<reference key="2">
    <citation type="journal article" date="1997" name="Science">
        <title>The complete genome sequence of Escherichia coli K-12.</title>
        <authorList>
            <person name="Blattner F.R."/>
            <person name="Plunkett G. III"/>
            <person name="Bloch C.A."/>
            <person name="Perna N.T."/>
            <person name="Burland V."/>
            <person name="Riley M."/>
            <person name="Collado-Vides J."/>
            <person name="Glasner J.D."/>
            <person name="Rode C.K."/>
            <person name="Mayhew G.F."/>
            <person name="Gregor J."/>
            <person name="Davis N.W."/>
            <person name="Kirkpatrick H.A."/>
            <person name="Goeden M.A."/>
            <person name="Rose D.J."/>
            <person name="Mau B."/>
            <person name="Shao Y."/>
        </authorList>
    </citation>
    <scope>NUCLEOTIDE SEQUENCE [LARGE SCALE GENOMIC DNA]</scope>
    <source>
        <strain>K12 / MG1655 / ATCC 47076</strain>
    </source>
</reference>
<reference key="3">
    <citation type="journal article" date="2006" name="Mol. Syst. Biol.">
        <title>Highly accurate genome sequences of Escherichia coli K-12 strains MG1655 and W3110.</title>
        <authorList>
            <person name="Hayashi K."/>
            <person name="Morooka N."/>
            <person name="Yamamoto Y."/>
            <person name="Fujita K."/>
            <person name="Isono K."/>
            <person name="Choi S."/>
            <person name="Ohtsubo E."/>
            <person name="Baba T."/>
            <person name="Wanner B.L."/>
            <person name="Mori H."/>
            <person name="Horiuchi T."/>
        </authorList>
    </citation>
    <scope>NUCLEOTIDE SEQUENCE [LARGE SCALE GENOMIC DNA]</scope>
    <source>
        <strain>K12 / W3110 / ATCC 27325 / DSM 5911</strain>
    </source>
</reference>
<reference key="4">
    <citation type="journal article" date="2010" name="Environ. Microbiol.">
        <title>Escherichia coli K-12 possesses multiple cryptic but functional chaperone-usher fimbriae with distinct surface specificities.</title>
        <authorList>
            <person name="Korea C.G."/>
            <person name="Badouraly R."/>
            <person name="Prevost M.C."/>
            <person name="Ghigo J.M."/>
            <person name="Beloin C."/>
        </authorList>
    </citation>
    <scope>FUNCTION</scope>
    <scope>INDUCTION</scope>
    <scope>DISRUPTION PHENOTYPE</scope>
    <source>
        <strain>K12 / MG1655 / ATCC 47076</strain>
    </source>
</reference>
<keyword id="KW-0143">Chaperone</keyword>
<keyword id="KW-1029">Fimbrium biogenesis</keyword>
<keyword id="KW-0393">Immunoglobulin domain</keyword>
<keyword id="KW-0574">Periplasm</keyword>
<keyword id="KW-1185">Reference proteome</keyword>
<keyword id="KW-0732">Signal</keyword>
<sequence length="239" mass="26589">MAAIPWRPFNLRGIKMKGLLSLLIFSMVLPAHAGIVIYGTRIIYPAENKEVMVQLMNQGNRSSLLQAWIDDGDTSLPPEKIQVPFMLTPPVAKIGANSGQQVKIKIMPNKLPTNKESIFYLNVLDIPPNSPEQEGKNALKFAMQNRIKLFYRPAGIAPVNKATFKKLLVNRSGNGLVIKNDSANWVTISDVKANNVKVNYETIMIAPLESQSVNVKSNNANNWHLTIIDDHGNYISDKI</sequence>
<protein>
    <recommendedName>
        <fullName>Probable fimbrial chaperone YehC</fullName>
    </recommendedName>
</protein>
<name>YEHC_ECOLI</name>
<gene>
    <name type="primary">yehC</name>
    <name type="ordered locus">b2110</name>
    <name type="ordered locus">JW2097</name>
</gene>
<organism>
    <name type="scientific">Escherichia coli (strain K12)</name>
    <dbReference type="NCBI Taxonomy" id="83333"/>
    <lineage>
        <taxon>Bacteria</taxon>
        <taxon>Pseudomonadati</taxon>
        <taxon>Pseudomonadota</taxon>
        <taxon>Gammaproteobacteria</taxon>
        <taxon>Enterobacterales</taxon>
        <taxon>Enterobacteriaceae</taxon>
        <taxon>Escherichia</taxon>
    </lineage>
</organism>
<feature type="signal peptide" evidence="2">
    <location>
        <begin position="1"/>
        <end position="31"/>
    </location>
</feature>
<feature type="chain" id="PRO_0000009293" description="Probable fimbrial chaperone YehC">
    <location>
        <begin position="32"/>
        <end position="239"/>
    </location>
</feature>